<protein>
    <recommendedName>
        <fullName evidence="1">Type III pantothenate kinase</fullName>
        <ecNumber evidence="1">2.7.1.33</ecNumber>
    </recommendedName>
    <alternativeName>
        <fullName evidence="1">PanK-III</fullName>
    </alternativeName>
    <alternativeName>
        <fullName evidence="1">Pantothenic acid kinase</fullName>
    </alternativeName>
</protein>
<feature type="chain" id="PRO_0000267587" description="Type III pantothenate kinase">
    <location>
        <begin position="1"/>
        <end position="259"/>
    </location>
</feature>
<feature type="active site" description="Proton acceptor" evidence="1">
    <location>
        <position position="109"/>
    </location>
</feature>
<feature type="binding site" evidence="1">
    <location>
        <begin position="6"/>
        <end position="13"/>
    </location>
    <ligand>
        <name>ATP</name>
        <dbReference type="ChEBI" id="CHEBI:30616"/>
    </ligand>
</feature>
<feature type="binding site" evidence="1">
    <location>
        <begin position="107"/>
        <end position="110"/>
    </location>
    <ligand>
        <name>substrate</name>
    </ligand>
</feature>
<feature type="binding site" evidence="1">
    <location>
        <position position="129"/>
    </location>
    <ligand>
        <name>K(+)</name>
        <dbReference type="ChEBI" id="CHEBI:29103"/>
    </ligand>
</feature>
<feature type="binding site" evidence="1">
    <location>
        <position position="132"/>
    </location>
    <ligand>
        <name>ATP</name>
        <dbReference type="ChEBI" id="CHEBI:30616"/>
    </ligand>
</feature>
<feature type="binding site" evidence="1">
    <location>
        <position position="184"/>
    </location>
    <ligand>
        <name>substrate</name>
    </ligand>
</feature>
<organism>
    <name type="scientific">Ruegeria pomeroyi (strain ATCC 700808 / DSM 15171 / DSS-3)</name>
    <name type="common">Silicibacter pomeroyi</name>
    <dbReference type="NCBI Taxonomy" id="246200"/>
    <lineage>
        <taxon>Bacteria</taxon>
        <taxon>Pseudomonadati</taxon>
        <taxon>Pseudomonadota</taxon>
        <taxon>Alphaproteobacteria</taxon>
        <taxon>Rhodobacterales</taxon>
        <taxon>Roseobacteraceae</taxon>
        <taxon>Ruegeria</taxon>
    </lineage>
</organism>
<reference key="1">
    <citation type="journal article" date="2004" name="Nature">
        <title>Genome sequence of Silicibacter pomeroyi reveals adaptations to the marine environment.</title>
        <authorList>
            <person name="Moran M.A."/>
            <person name="Buchan A."/>
            <person name="Gonzalez J.M."/>
            <person name="Heidelberg J.F."/>
            <person name="Whitman W.B."/>
            <person name="Kiene R.P."/>
            <person name="Henriksen J.R."/>
            <person name="King G.M."/>
            <person name="Belas R."/>
            <person name="Fuqua C."/>
            <person name="Brinkac L.M."/>
            <person name="Lewis M."/>
            <person name="Johri S."/>
            <person name="Weaver B."/>
            <person name="Pai G."/>
            <person name="Eisen J.A."/>
            <person name="Rahe E."/>
            <person name="Sheldon W.M."/>
            <person name="Ye W."/>
            <person name="Miller T.R."/>
            <person name="Carlton J."/>
            <person name="Rasko D.A."/>
            <person name="Paulsen I.T."/>
            <person name="Ren Q."/>
            <person name="Daugherty S.C."/>
            <person name="DeBoy R.T."/>
            <person name="Dodson R.J."/>
            <person name="Durkin A.S."/>
            <person name="Madupu R."/>
            <person name="Nelson W.C."/>
            <person name="Sullivan S.A."/>
            <person name="Rosovitz M.J."/>
            <person name="Haft D.H."/>
            <person name="Selengut J."/>
            <person name="Ward N."/>
        </authorList>
    </citation>
    <scope>NUCLEOTIDE SEQUENCE [LARGE SCALE GENOMIC DNA]</scope>
    <source>
        <strain>ATCC 700808 / DSM 15171 / DSS-3</strain>
    </source>
</reference>
<reference key="2">
    <citation type="journal article" date="2014" name="Stand. Genomic Sci.">
        <title>An updated genome annotation for the model marine bacterium Ruegeria pomeroyi DSS-3.</title>
        <authorList>
            <person name="Rivers A.R."/>
            <person name="Smith C.B."/>
            <person name="Moran M.A."/>
        </authorList>
    </citation>
    <scope>GENOME REANNOTATION</scope>
    <source>
        <strain>ATCC 700808 / DSM 15171 / DSS-3</strain>
    </source>
</reference>
<name>COAX_RUEPO</name>
<evidence type="ECO:0000255" key="1">
    <source>
        <dbReference type="HAMAP-Rule" id="MF_01274"/>
    </source>
</evidence>
<keyword id="KW-0067">ATP-binding</keyword>
<keyword id="KW-0173">Coenzyme A biosynthesis</keyword>
<keyword id="KW-0963">Cytoplasm</keyword>
<keyword id="KW-0418">Kinase</keyword>
<keyword id="KW-0479">Metal-binding</keyword>
<keyword id="KW-0547">Nucleotide-binding</keyword>
<keyword id="KW-0630">Potassium</keyword>
<keyword id="KW-1185">Reference proteome</keyword>
<keyword id="KW-0808">Transferase</keyword>
<proteinExistence type="inferred from homology"/>
<comment type="function">
    <text evidence="1">Catalyzes the phosphorylation of pantothenate (Pan), the first step in CoA biosynthesis.</text>
</comment>
<comment type="catalytic activity">
    <reaction evidence="1">
        <text>(R)-pantothenate + ATP = (R)-4'-phosphopantothenate + ADP + H(+)</text>
        <dbReference type="Rhea" id="RHEA:16373"/>
        <dbReference type="ChEBI" id="CHEBI:10986"/>
        <dbReference type="ChEBI" id="CHEBI:15378"/>
        <dbReference type="ChEBI" id="CHEBI:29032"/>
        <dbReference type="ChEBI" id="CHEBI:30616"/>
        <dbReference type="ChEBI" id="CHEBI:456216"/>
        <dbReference type="EC" id="2.7.1.33"/>
    </reaction>
</comment>
<comment type="cofactor">
    <cofactor evidence="1">
        <name>NH4(+)</name>
        <dbReference type="ChEBI" id="CHEBI:28938"/>
    </cofactor>
    <cofactor evidence="1">
        <name>K(+)</name>
        <dbReference type="ChEBI" id="CHEBI:29103"/>
    </cofactor>
    <text evidence="1">A monovalent cation. Ammonium or potassium.</text>
</comment>
<comment type="pathway">
    <text evidence="1">Cofactor biosynthesis; coenzyme A biosynthesis; CoA from (R)-pantothenate: step 1/5.</text>
</comment>
<comment type="subunit">
    <text evidence="1">Homodimer.</text>
</comment>
<comment type="subcellular location">
    <subcellularLocation>
        <location evidence="1">Cytoplasm</location>
    </subcellularLocation>
</comment>
<comment type="similarity">
    <text evidence="1">Belongs to the type III pantothenate kinase family.</text>
</comment>
<accession>Q5LPT8</accession>
<gene>
    <name evidence="1" type="primary">coaX</name>
    <name type="ordered locus">SPO2761</name>
</gene>
<dbReference type="EC" id="2.7.1.33" evidence="1"/>
<dbReference type="EMBL" id="CP000031">
    <property type="protein sequence ID" value="AAV96002.1"/>
    <property type="molecule type" value="Genomic_DNA"/>
</dbReference>
<dbReference type="RefSeq" id="WP_011048460.1">
    <property type="nucleotide sequence ID" value="NC_003911.12"/>
</dbReference>
<dbReference type="SMR" id="Q5LPT8"/>
<dbReference type="STRING" id="246200.SPO2761"/>
<dbReference type="PaxDb" id="246200-SPO2761"/>
<dbReference type="KEGG" id="sil:SPO2761"/>
<dbReference type="eggNOG" id="COG1521">
    <property type="taxonomic scope" value="Bacteria"/>
</dbReference>
<dbReference type="HOGENOM" id="CLU_066627_1_0_5"/>
<dbReference type="OrthoDB" id="9804707at2"/>
<dbReference type="UniPathway" id="UPA00241">
    <property type="reaction ID" value="UER00352"/>
</dbReference>
<dbReference type="Proteomes" id="UP000001023">
    <property type="component" value="Chromosome"/>
</dbReference>
<dbReference type="GO" id="GO:0005737">
    <property type="term" value="C:cytoplasm"/>
    <property type="evidence" value="ECO:0007669"/>
    <property type="project" value="UniProtKB-SubCell"/>
</dbReference>
<dbReference type="GO" id="GO:0005524">
    <property type="term" value="F:ATP binding"/>
    <property type="evidence" value="ECO:0007669"/>
    <property type="project" value="UniProtKB-UniRule"/>
</dbReference>
<dbReference type="GO" id="GO:0046872">
    <property type="term" value="F:metal ion binding"/>
    <property type="evidence" value="ECO:0007669"/>
    <property type="project" value="UniProtKB-KW"/>
</dbReference>
<dbReference type="GO" id="GO:0004594">
    <property type="term" value="F:pantothenate kinase activity"/>
    <property type="evidence" value="ECO:0007669"/>
    <property type="project" value="UniProtKB-UniRule"/>
</dbReference>
<dbReference type="GO" id="GO:0015937">
    <property type="term" value="P:coenzyme A biosynthetic process"/>
    <property type="evidence" value="ECO:0007669"/>
    <property type="project" value="UniProtKB-UniRule"/>
</dbReference>
<dbReference type="CDD" id="cd24015">
    <property type="entry name" value="ASKHA_NBD_PanK-III"/>
    <property type="match status" value="1"/>
</dbReference>
<dbReference type="Gene3D" id="3.30.420.40">
    <property type="match status" value="2"/>
</dbReference>
<dbReference type="HAMAP" id="MF_01274">
    <property type="entry name" value="Pantothen_kinase_3"/>
    <property type="match status" value="1"/>
</dbReference>
<dbReference type="InterPro" id="IPR043129">
    <property type="entry name" value="ATPase_NBD"/>
</dbReference>
<dbReference type="InterPro" id="IPR004619">
    <property type="entry name" value="Type_III_PanK"/>
</dbReference>
<dbReference type="NCBIfam" id="TIGR00671">
    <property type="entry name" value="baf"/>
    <property type="match status" value="1"/>
</dbReference>
<dbReference type="NCBIfam" id="NF009844">
    <property type="entry name" value="PRK13318.1-2"/>
    <property type="match status" value="1"/>
</dbReference>
<dbReference type="NCBIfam" id="NF009855">
    <property type="entry name" value="PRK13321.1"/>
    <property type="match status" value="1"/>
</dbReference>
<dbReference type="PANTHER" id="PTHR34265">
    <property type="entry name" value="TYPE III PANTOTHENATE KINASE"/>
    <property type="match status" value="1"/>
</dbReference>
<dbReference type="PANTHER" id="PTHR34265:SF1">
    <property type="entry name" value="TYPE III PANTOTHENATE KINASE"/>
    <property type="match status" value="1"/>
</dbReference>
<dbReference type="Pfam" id="PF03309">
    <property type="entry name" value="Pan_kinase"/>
    <property type="match status" value="1"/>
</dbReference>
<dbReference type="SUPFAM" id="SSF53067">
    <property type="entry name" value="Actin-like ATPase domain"/>
    <property type="match status" value="2"/>
</dbReference>
<sequence>MLLAIDCGNTNTVFSIWDGEKFLCTLRTSTHHARTADAYFTWYSTLIKHYGIETDITDVIISSTVPRVVFNLRVFADRFFGCRPLVVGKPDCLLPVQPRVDAGTAVGPDRLVNAAAAYDRHGGNKIVVDFGTATTFDVVDDDGAYVGGVIAPGVNLSLEALHMAAAALPHVDIAKPQAVIGTNTVACMQSGVFWGYVGLVKEICARIKGERDRDMQVIATGGLAALFQQSEILFDIFEDDLTMHGLTVIHRHNKENGTV</sequence>